<protein>
    <recommendedName>
        <fullName evidence="1">NAD(P)H-quinone oxidoreductase subunit 3</fullName>
        <ecNumber evidence="1">7.1.1.-</ecNumber>
    </recommendedName>
    <alternativeName>
        <fullName evidence="1">NAD(P)H dehydrogenase subunit 3</fullName>
    </alternativeName>
    <alternativeName>
        <fullName evidence="1">NADH-plastoquinone oxidoreductase subunit 3</fullName>
    </alternativeName>
    <alternativeName>
        <fullName evidence="1">NDH-1 subunit 3</fullName>
        <shortName evidence="1">NDH-C</shortName>
    </alternativeName>
</protein>
<sequence>MFALPGYDAFLGFLLIAAAVPALALITNKFLAPKSRAGERQLTYESGMEPIGGAWIQFNIRYYMFALVFVIFDVETVFLYPWAVAFHRLGVLAFIEALIFITILLVALAYAWRKGALEWS</sequence>
<name>NU3C_PARMW</name>
<dbReference type="EC" id="7.1.1.-" evidence="1"/>
<dbReference type="EMBL" id="BX569689">
    <property type="protein sequence ID" value="CAE06722.1"/>
    <property type="molecule type" value="Genomic_DNA"/>
</dbReference>
<dbReference type="RefSeq" id="WP_011127083.1">
    <property type="nucleotide sequence ID" value="NC_005070.1"/>
</dbReference>
<dbReference type="SMR" id="Q7U9P6"/>
<dbReference type="STRING" id="84588.SYNW0207"/>
<dbReference type="KEGG" id="syw:SYNW0207"/>
<dbReference type="eggNOG" id="COG0838">
    <property type="taxonomic scope" value="Bacteria"/>
</dbReference>
<dbReference type="HOGENOM" id="CLU_119549_1_1_3"/>
<dbReference type="BioCyc" id="MetaCyc:TX72_RS01030-MONOMER"/>
<dbReference type="Proteomes" id="UP000001422">
    <property type="component" value="Chromosome"/>
</dbReference>
<dbReference type="GO" id="GO:0030964">
    <property type="term" value="C:NADH dehydrogenase complex"/>
    <property type="evidence" value="ECO:0007669"/>
    <property type="project" value="TreeGrafter"/>
</dbReference>
<dbReference type="GO" id="GO:0031676">
    <property type="term" value="C:plasma membrane-derived thylakoid membrane"/>
    <property type="evidence" value="ECO:0007669"/>
    <property type="project" value="UniProtKB-SubCell"/>
</dbReference>
<dbReference type="GO" id="GO:0008137">
    <property type="term" value="F:NADH dehydrogenase (ubiquinone) activity"/>
    <property type="evidence" value="ECO:0007669"/>
    <property type="project" value="InterPro"/>
</dbReference>
<dbReference type="GO" id="GO:0048038">
    <property type="term" value="F:quinone binding"/>
    <property type="evidence" value="ECO:0007669"/>
    <property type="project" value="UniProtKB-KW"/>
</dbReference>
<dbReference type="GO" id="GO:0019684">
    <property type="term" value="P:photosynthesis, light reaction"/>
    <property type="evidence" value="ECO:0007669"/>
    <property type="project" value="UniProtKB-UniRule"/>
</dbReference>
<dbReference type="Gene3D" id="1.20.58.1610">
    <property type="entry name" value="NADH:ubiquinone/plastoquinone oxidoreductase, chain 3"/>
    <property type="match status" value="1"/>
</dbReference>
<dbReference type="HAMAP" id="MF_01394">
    <property type="entry name" value="NDH1_NuoA"/>
    <property type="match status" value="1"/>
</dbReference>
<dbReference type="InterPro" id="IPR023043">
    <property type="entry name" value="NAD(P)H_OxRDtase_bac/plastid"/>
</dbReference>
<dbReference type="InterPro" id="IPR000440">
    <property type="entry name" value="NADH_UbQ/plastoQ_OxRdtase_su3"/>
</dbReference>
<dbReference type="InterPro" id="IPR038430">
    <property type="entry name" value="NDAH_ubi_oxred_su3_sf"/>
</dbReference>
<dbReference type="PANTHER" id="PTHR11058">
    <property type="entry name" value="NADH-UBIQUINONE OXIDOREDUCTASE CHAIN 3"/>
    <property type="match status" value="1"/>
</dbReference>
<dbReference type="PANTHER" id="PTHR11058:SF9">
    <property type="entry name" value="NADH-UBIQUINONE OXIDOREDUCTASE CHAIN 3"/>
    <property type="match status" value="1"/>
</dbReference>
<dbReference type="Pfam" id="PF00507">
    <property type="entry name" value="Oxidored_q4"/>
    <property type="match status" value="1"/>
</dbReference>
<keyword id="KW-0472">Membrane</keyword>
<keyword id="KW-0520">NAD</keyword>
<keyword id="KW-0521">NADP</keyword>
<keyword id="KW-0618">Plastoquinone</keyword>
<keyword id="KW-0874">Quinone</keyword>
<keyword id="KW-0793">Thylakoid</keyword>
<keyword id="KW-1278">Translocase</keyword>
<keyword id="KW-0812">Transmembrane</keyword>
<keyword id="KW-1133">Transmembrane helix</keyword>
<keyword id="KW-0813">Transport</keyword>
<organism>
    <name type="scientific">Parasynechococcus marenigrum (strain WH8102)</name>
    <dbReference type="NCBI Taxonomy" id="84588"/>
    <lineage>
        <taxon>Bacteria</taxon>
        <taxon>Bacillati</taxon>
        <taxon>Cyanobacteriota</taxon>
        <taxon>Cyanophyceae</taxon>
        <taxon>Synechococcales</taxon>
        <taxon>Prochlorococcaceae</taxon>
        <taxon>Parasynechococcus</taxon>
        <taxon>Parasynechococcus marenigrum</taxon>
    </lineage>
</organism>
<comment type="function">
    <text evidence="1">NDH-1 shuttles electrons from an unknown electron donor, via FMN and iron-sulfur (Fe-S) centers, to quinones in the respiratory and/or the photosynthetic chain. The immediate electron acceptor for the enzyme in this species is believed to be plastoquinone. Couples the redox reaction to proton translocation, and thus conserves the redox energy in a proton gradient. Cyanobacterial NDH-1 also plays a role in inorganic carbon-concentration.</text>
</comment>
<comment type="catalytic activity">
    <reaction evidence="1">
        <text>a plastoquinone + NADH + (n+1) H(+)(in) = a plastoquinol + NAD(+) + n H(+)(out)</text>
        <dbReference type="Rhea" id="RHEA:42608"/>
        <dbReference type="Rhea" id="RHEA-COMP:9561"/>
        <dbReference type="Rhea" id="RHEA-COMP:9562"/>
        <dbReference type="ChEBI" id="CHEBI:15378"/>
        <dbReference type="ChEBI" id="CHEBI:17757"/>
        <dbReference type="ChEBI" id="CHEBI:57540"/>
        <dbReference type="ChEBI" id="CHEBI:57945"/>
        <dbReference type="ChEBI" id="CHEBI:62192"/>
    </reaction>
</comment>
<comment type="catalytic activity">
    <reaction evidence="1">
        <text>a plastoquinone + NADPH + (n+1) H(+)(in) = a plastoquinol + NADP(+) + n H(+)(out)</text>
        <dbReference type="Rhea" id="RHEA:42612"/>
        <dbReference type="Rhea" id="RHEA-COMP:9561"/>
        <dbReference type="Rhea" id="RHEA-COMP:9562"/>
        <dbReference type="ChEBI" id="CHEBI:15378"/>
        <dbReference type="ChEBI" id="CHEBI:17757"/>
        <dbReference type="ChEBI" id="CHEBI:57783"/>
        <dbReference type="ChEBI" id="CHEBI:58349"/>
        <dbReference type="ChEBI" id="CHEBI:62192"/>
    </reaction>
</comment>
<comment type="subunit">
    <text evidence="1">NDH-1 can be composed of about 15 different subunits; different subcomplexes with different compositions have been identified which probably have different functions.</text>
</comment>
<comment type="subcellular location">
    <subcellularLocation>
        <location evidence="1">Cellular thylakoid membrane</location>
        <topology evidence="1">Multi-pass membrane protein</topology>
    </subcellularLocation>
</comment>
<comment type="similarity">
    <text evidence="1">Belongs to the complex I subunit 3 family.</text>
</comment>
<proteinExistence type="inferred from homology"/>
<accession>Q7U9P6</accession>
<gene>
    <name evidence="1" type="primary">ndhC</name>
    <name type="ordered locus">SYNW0207</name>
</gene>
<feature type="chain" id="PRO_5000096110" description="NAD(P)H-quinone oxidoreductase subunit 3">
    <location>
        <begin position="1"/>
        <end position="120"/>
    </location>
</feature>
<feature type="transmembrane region" description="Helical" evidence="1">
    <location>
        <begin position="6"/>
        <end position="26"/>
    </location>
</feature>
<feature type="transmembrane region" description="Helical" evidence="1">
    <location>
        <begin position="64"/>
        <end position="84"/>
    </location>
</feature>
<feature type="transmembrane region" description="Helical" evidence="1">
    <location>
        <begin position="89"/>
        <end position="109"/>
    </location>
</feature>
<reference key="1">
    <citation type="journal article" date="2003" name="Nature">
        <title>The genome of a motile marine Synechococcus.</title>
        <authorList>
            <person name="Palenik B."/>
            <person name="Brahamsha B."/>
            <person name="Larimer F.W."/>
            <person name="Land M.L."/>
            <person name="Hauser L."/>
            <person name="Chain P."/>
            <person name="Lamerdin J.E."/>
            <person name="Regala W."/>
            <person name="Allen E.E."/>
            <person name="McCarren J."/>
            <person name="Paulsen I.T."/>
            <person name="Dufresne A."/>
            <person name="Partensky F."/>
            <person name="Webb E.A."/>
            <person name="Waterbury J."/>
        </authorList>
    </citation>
    <scope>NUCLEOTIDE SEQUENCE [LARGE SCALE GENOMIC DNA]</scope>
    <source>
        <strain>WH8102</strain>
    </source>
</reference>
<evidence type="ECO:0000255" key="1">
    <source>
        <dbReference type="HAMAP-Rule" id="MF_01394"/>
    </source>
</evidence>